<comment type="similarity">
    <text evidence="1">Belongs to the UPF0178 family.</text>
</comment>
<sequence length="157" mass="16818">MTAIRLYVDADACPVKDEIYRVAERHGVSVSVVAGGYIRVPDHPLIERIAAGPGMDAADDWIAERAGKTDIVITADIPLASRCVKAGASVIAPNGKPFTEQSIGMTLAVRNLMTDLRASGEMTGGPRSFQPRDRSAFLSALDQAIRRIRRACAARQG</sequence>
<feature type="chain" id="PRO_0000241817" description="UPF0178 protein Nwi_2152">
    <location>
        <begin position="1"/>
        <end position="157"/>
    </location>
</feature>
<reference key="1">
    <citation type="journal article" date="2006" name="Appl. Environ. Microbiol.">
        <title>Genome sequence of the chemolithoautotrophic nitrite-oxidizing bacterium Nitrobacter winogradskyi Nb-255.</title>
        <authorList>
            <person name="Starkenburg S.R."/>
            <person name="Chain P.S.G."/>
            <person name="Sayavedra-Soto L.A."/>
            <person name="Hauser L."/>
            <person name="Land M.L."/>
            <person name="Larimer F.W."/>
            <person name="Malfatti S.A."/>
            <person name="Klotz M.G."/>
            <person name="Bottomley P.J."/>
            <person name="Arp D.J."/>
            <person name="Hickey W.J."/>
        </authorList>
    </citation>
    <scope>NUCLEOTIDE SEQUENCE [LARGE SCALE GENOMIC DNA]</scope>
    <source>
        <strain>ATCC 25391 / DSM 10237 / CIP 104748 / NCIMB 11846 / Nb-255</strain>
    </source>
</reference>
<organism>
    <name type="scientific">Nitrobacter winogradskyi (strain ATCC 25391 / DSM 10237 / CIP 104748 / NCIMB 11846 / Nb-255)</name>
    <dbReference type="NCBI Taxonomy" id="323098"/>
    <lineage>
        <taxon>Bacteria</taxon>
        <taxon>Pseudomonadati</taxon>
        <taxon>Pseudomonadota</taxon>
        <taxon>Alphaproteobacteria</taxon>
        <taxon>Hyphomicrobiales</taxon>
        <taxon>Nitrobacteraceae</taxon>
        <taxon>Nitrobacter</taxon>
    </lineage>
</organism>
<keyword id="KW-1185">Reference proteome</keyword>
<proteinExistence type="inferred from homology"/>
<protein>
    <recommendedName>
        <fullName evidence="1">UPF0178 protein Nwi_2152</fullName>
    </recommendedName>
</protein>
<gene>
    <name type="ordered locus">Nwi_2152</name>
</gene>
<name>Y2152_NITWN</name>
<accession>Q3SQN5</accession>
<evidence type="ECO:0000255" key="1">
    <source>
        <dbReference type="HAMAP-Rule" id="MF_00489"/>
    </source>
</evidence>
<dbReference type="EMBL" id="CP000115">
    <property type="protein sequence ID" value="ABA05406.1"/>
    <property type="molecule type" value="Genomic_DNA"/>
</dbReference>
<dbReference type="RefSeq" id="WP_011315375.1">
    <property type="nucleotide sequence ID" value="NC_007406.1"/>
</dbReference>
<dbReference type="KEGG" id="nwi:Nwi_2152"/>
<dbReference type="eggNOG" id="COG1671">
    <property type="taxonomic scope" value="Bacteria"/>
</dbReference>
<dbReference type="HOGENOM" id="CLU_106619_2_1_5"/>
<dbReference type="OrthoDB" id="9798918at2"/>
<dbReference type="Proteomes" id="UP000002531">
    <property type="component" value="Chromosome"/>
</dbReference>
<dbReference type="CDD" id="cd18720">
    <property type="entry name" value="PIN_YqxD-like"/>
    <property type="match status" value="1"/>
</dbReference>
<dbReference type="HAMAP" id="MF_00489">
    <property type="entry name" value="UPF0178"/>
    <property type="match status" value="1"/>
</dbReference>
<dbReference type="InterPro" id="IPR003791">
    <property type="entry name" value="UPF0178"/>
</dbReference>
<dbReference type="NCBIfam" id="NF001095">
    <property type="entry name" value="PRK00124.1"/>
    <property type="match status" value="1"/>
</dbReference>
<dbReference type="PANTHER" id="PTHR35146">
    <property type="entry name" value="UPF0178 PROTEIN YAII"/>
    <property type="match status" value="1"/>
</dbReference>
<dbReference type="PANTHER" id="PTHR35146:SF1">
    <property type="entry name" value="UPF0178 PROTEIN YAII"/>
    <property type="match status" value="1"/>
</dbReference>
<dbReference type="Pfam" id="PF02639">
    <property type="entry name" value="DUF188"/>
    <property type="match status" value="1"/>
</dbReference>